<keyword id="KW-0249">Electron transport</keyword>
<keyword id="KW-0349">Heme</keyword>
<keyword id="KW-0408">Iron</keyword>
<keyword id="KW-0472">Membrane</keyword>
<keyword id="KW-0479">Metal-binding</keyword>
<keyword id="KW-0496">Mitochondrion</keyword>
<keyword id="KW-0999">Mitochondrion inner membrane</keyword>
<keyword id="KW-0679">Respiratory chain</keyword>
<keyword id="KW-0812">Transmembrane</keyword>
<keyword id="KW-1133">Transmembrane helix</keyword>
<keyword id="KW-0813">Transport</keyword>
<keyword id="KW-0830">Ubiquinone</keyword>
<comment type="function">
    <text evidence="2">Component of the ubiquinol-cytochrome c reductase complex (complex III or cytochrome b-c1 complex) that is part of the mitochondrial respiratory chain. The b-c1 complex mediates electron transfer from ubiquinol to cytochrome c. Contributes to the generation of a proton gradient across the mitochondrial membrane that is then used for ATP synthesis.</text>
</comment>
<comment type="cofactor">
    <cofactor evidence="2">
        <name>heme b</name>
        <dbReference type="ChEBI" id="CHEBI:60344"/>
    </cofactor>
    <text evidence="2">Binds 2 heme b groups non-covalently.</text>
</comment>
<comment type="subunit">
    <text evidence="2">The cytochrome bc1 complex contains 11 subunits: 3 respiratory subunits (MT-CYB, CYC1 and UQCRFS1), 2 core proteins (UQCRC1 and UQCRC2) and 6 low-molecular weight proteins (UQCRH/QCR6, UQCRB/QCR7, UQCRQ/QCR8, UQCR10/QCR9, UQCR11/QCR10 and a cleavage product of UQCRFS1). This cytochrome bc1 complex then forms a dimer.</text>
</comment>
<comment type="subcellular location">
    <subcellularLocation>
        <location evidence="2">Mitochondrion inner membrane</location>
        <topology evidence="2">Multi-pass membrane protein</topology>
    </subcellularLocation>
</comment>
<comment type="miscellaneous">
    <text evidence="1">Heme 1 (or BL or b562) is low-potential and absorbs at about 562 nm, and heme 2 (or BH or b566) is high-potential and absorbs at about 566 nm.</text>
</comment>
<comment type="similarity">
    <text evidence="3 4">Belongs to the cytochrome b family.</text>
</comment>
<comment type="caution">
    <text evidence="2">The full-length protein contains only eight transmembrane helices, not nine as predicted by bioinformatics tools.</text>
</comment>
<name>CYB_SPEAL</name>
<feature type="chain" id="PRO_0000255135" description="Cytochrome b">
    <location>
        <begin position="1"/>
        <end position="379"/>
    </location>
</feature>
<feature type="transmembrane region" description="Helical" evidence="2">
    <location>
        <begin position="33"/>
        <end position="53"/>
    </location>
</feature>
<feature type="transmembrane region" description="Helical" evidence="2">
    <location>
        <begin position="77"/>
        <end position="98"/>
    </location>
</feature>
<feature type="transmembrane region" description="Helical" evidence="2">
    <location>
        <begin position="113"/>
        <end position="133"/>
    </location>
</feature>
<feature type="transmembrane region" description="Helical" evidence="2">
    <location>
        <begin position="178"/>
        <end position="198"/>
    </location>
</feature>
<feature type="transmembrane region" description="Helical" evidence="2">
    <location>
        <begin position="226"/>
        <end position="246"/>
    </location>
</feature>
<feature type="transmembrane region" description="Helical" evidence="2">
    <location>
        <begin position="288"/>
        <end position="308"/>
    </location>
</feature>
<feature type="transmembrane region" description="Helical" evidence="2">
    <location>
        <begin position="320"/>
        <end position="340"/>
    </location>
</feature>
<feature type="transmembrane region" description="Helical" evidence="2">
    <location>
        <begin position="347"/>
        <end position="367"/>
    </location>
</feature>
<feature type="binding site" description="axial binding residue" evidence="2">
    <location>
        <position position="83"/>
    </location>
    <ligand>
        <name>heme b</name>
        <dbReference type="ChEBI" id="CHEBI:60344"/>
        <label>b562</label>
    </ligand>
    <ligandPart>
        <name>Fe</name>
        <dbReference type="ChEBI" id="CHEBI:18248"/>
    </ligandPart>
</feature>
<feature type="binding site" description="axial binding residue" evidence="2">
    <location>
        <position position="97"/>
    </location>
    <ligand>
        <name>heme b</name>
        <dbReference type="ChEBI" id="CHEBI:60344"/>
        <label>b566</label>
    </ligand>
    <ligandPart>
        <name>Fe</name>
        <dbReference type="ChEBI" id="CHEBI:18248"/>
    </ligandPart>
</feature>
<feature type="binding site" description="axial binding residue" evidence="2">
    <location>
        <position position="182"/>
    </location>
    <ligand>
        <name>heme b</name>
        <dbReference type="ChEBI" id="CHEBI:60344"/>
        <label>b562</label>
    </ligand>
    <ligandPart>
        <name>Fe</name>
        <dbReference type="ChEBI" id="CHEBI:18248"/>
    </ligandPart>
</feature>
<feature type="binding site" description="axial binding residue" evidence="2">
    <location>
        <position position="196"/>
    </location>
    <ligand>
        <name>heme b</name>
        <dbReference type="ChEBI" id="CHEBI:60344"/>
        <label>b566</label>
    </ligand>
    <ligandPart>
        <name>Fe</name>
        <dbReference type="ChEBI" id="CHEBI:18248"/>
    </ligandPart>
</feature>
<feature type="binding site" evidence="2">
    <location>
        <position position="201"/>
    </location>
    <ligand>
        <name>a ubiquinone</name>
        <dbReference type="ChEBI" id="CHEBI:16389"/>
    </ligand>
</feature>
<evidence type="ECO:0000250" key="1"/>
<evidence type="ECO:0000250" key="2">
    <source>
        <dbReference type="UniProtKB" id="P00157"/>
    </source>
</evidence>
<evidence type="ECO:0000255" key="3">
    <source>
        <dbReference type="PROSITE-ProRule" id="PRU00967"/>
    </source>
</evidence>
<evidence type="ECO:0000255" key="4">
    <source>
        <dbReference type="PROSITE-ProRule" id="PRU00968"/>
    </source>
</evidence>
<sequence>MTNTRKTHPLXKIINHSFIDLPAPSNISAWWNFGSLLGLCLIIQILTGLFLAMHYTSDTMTAFSSVTHICRDVNYGWLIRYMHANGASMFFICLFLHVGRGMYYGSYIYFETWNIGVILLFAVMATAFMGYVLPWGQMSFWGATVITNLLSAIPYIGTTLVEWIWGGFSVDKATLTRFFAFHFILPFIIAALAMVHLLFLHETGSNNPSGLISDSDKIPFHPYYTIKDTLGVLLLILTLMALVLFSPDLLGDPDNYTPANPLSTPPHIKPEWYFLFAYAILRSIPNKLGGVLALVFSILILMLFPLLHLSKQRSMMFRPLSQCVFWILVADLFTLTWIGGQPVEHPFIIIGQLASILYFAIILLILPTVSMIENKLLKW</sequence>
<protein>
    <recommendedName>
        <fullName>Cytochrome b</fullName>
    </recommendedName>
    <alternativeName>
        <fullName>Complex III subunit 3</fullName>
    </alternativeName>
    <alternativeName>
        <fullName>Complex III subunit III</fullName>
    </alternativeName>
    <alternativeName>
        <fullName>Cytochrome b-c1 complex subunit 3</fullName>
    </alternativeName>
    <alternativeName>
        <fullName>Ubiquinol-cytochrome-c reductase complex cytochrome b subunit</fullName>
    </alternativeName>
</protein>
<dbReference type="EMBL" id="AF157868">
    <property type="protein sequence ID" value="AAD50152.1"/>
    <property type="molecule type" value="Genomic_DNA"/>
</dbReference>
<dbReference type="GO" id="GO:0005743">
    <property type="term" value="C:mitochondrial inner membrane"/>
    <property type="evidence" value="ECO:0007669"/>
    <property type="project" value="UniProtKB-SubCell"/>
</dbReference>
<dbReference type="GO" id="GO:0045275">
    <property type="term" value="C:respiratory chain complex III"/>
    <property type="evidence" value="ECO:0007669"/>
    <property type="project" value="InterPro"/>
</dbReference>
<dbReference type="GO" id="GO:0046872">
    <property type="term" value="F:metal ion binding"/>
    <property type="evidence" value="ECO:0007669"/>
    <property type="project" value="UniProtKB-KW"/>
</dbReference>
<dbReference type="GO" id="GO:0008121">
    <property type="term" value="F:ubiquinol-cytochrome-c reductase activity"/>
    <property type="evidence" value="ECO:0007669"/>
    <property type="project" value="InterPro"/>
</dbReference>
<dbReference type="GO" id="GO:0006122">
    <property type="term" value="P:mitochondrial electron transport, ubiquinol to cytochrome c"/>
    <property type="evidence" value="ECO:0007669"/>
    <property type="project" value="TreeGrafter"/>
</dbReference>
<dbReference type="CDD" id="cd00290">
    <property type="entry name" value="cytochrome_b_C"/>
    <property type="match status" value="1"/>
</dbReference>
<dbReference type="CDD" id="cd00284">
    <property type="entry name" value="Cytochrome_b_N"/>
    <property type="match status" value="1"/>
</dbReference>
<dbReference type="FunFam" id="1.20.810.10:FF:000002">
    <property type="entry name" value="Cytochrome b"/>
    <property type="match status" value="1"/>
</dbReference>
<dbReference type="Gene3D" id="1.20.810.10">
    <property type="entry name" value="Cytochrome Bc1 Complex, Chain C"/>
    <property type="match status" value="1"/>
</dbReference>
<dbReference type="InterPro" id="IPR005798">
    <property type="entry name" value="Cyt_b/b6_C"/>
</dbReference>
<dbReference type="InterPro" id="IPR036150">
    <property type="entry name" value="Cyt_b/b6_C_sf"/>
</dbReference>
<dbReference type="InterPro" id="IPR005797">
    <property type="entry name" value="Cyt_b/b6_N"/>
</dbReference>
<dbReference type="InterPro" id="IPR027387">
    <property type="entry name" value="Cytb/b6-like_sf"/>
</dbReference>
<dbReference type="InterPro" id="IPR030689">
    <property type="entry name" value="Cytochrome_b"/>
</dbReference>
<dbReference type="InterPro" id="IPR048260">
    <property type="entry name" value="Cytochrome_b_C_euk/bac"/>
</dbReference>
<dbReference type="InterPro" id="IPR048259">
    <property type="entry name" value="Cytochrome_b_N_euk/bac"/>
</dbReference>
<dbReference type="InterPro" id="IPR016174">
    <property type="entry name" value="Di-haem_cyt_TM"/>
</dbReference>
<dbReference type="PANTHER" id="PTHR19271">
    <property type="entry name" value="CYTOCHROME B"/>
    <property type="match status" value="1"/>
</dbReference>
<dbReference type="PANTHER" id="PTHR19271:SF16">
    <property type="entry name" value="CYTOCHROME B"/>
    <property type="match status" value="1"/>
</dbReference>
<dbReference type="Pfam" id="PF00032">
    <property type="entry name" value="Cytochrom_B_C"/>
    <property type="match status" value="1"/>
</dbReference>
<dbReference type="Pfam" id="PF00033">
    <property type="entry name" value="Cytochrome_B"/>
    <property type="match status" value="1"/>
</dbReference>
<dbReference type="PIRSF" id="PIRSF038885">
    <property type="entry name" value="COB"/>
    <property type="match status" value="1"/>
</dbReference>
<dbReference type="SUPFAM" id="SSF81648">
    <property type="entry name" value="a domain/subunit of cytochrome bc1 complex (Ubiquinol-cytochrome c reductase)"/>
    <property type="match status" value="1"/>
</dbReference>
<dbReference type="SUPFAM" id="SSF81342">
    <property type="entry name" value="Transmembrane di-heme cytochromes"/>
    <property type="match status" value="1"/>
</dbReference>
<dbReference type="PROSITE" id="PS51003">
    <property type="entry name" value="CYTB_CTER"/>
    <property type="match status" value="1"/>
</dbReference>
<dbReference type="PROSITE" id="PS51002">
    <property type="entry name" value="CYTB_NTER"/>
    <property type="match status" value="1"/>
</dbReference>
<accession>Q7IY99</accession>
<geneLocation type="mitochondrion"/>
<organism>
    <name type="scientific">Spermophilus alashanicus</name>
    <name type="common">Alashan ground squirrel</name>
    <dbReference type="NCBI Taxonomy" id="99830"/>
    <lineage>
        <taxon>Eukaryota</taxon>
        <taxon>Metazoa</taxon>
        <taxon>Chordata</taxon>
        <taxon>Craniata</taxon>
        <taxon>Vertebrata</taxon>
        <taxon>Euteleostomi</taxon>
        <taxon>Mammalia</taxon>
        <taxon>Eutheria</taxon>
        <taxon>Euarchontoglires</taxon>
        <taxon>Glires</taxon>
        <taxon>Rodentia</taxon>
        <taxon>Sciuromorpha</taxon>
        <taxon>Sciuridae</taxon>
        <taxon>Xerinae</taxon>
        <taxon>Marmotini</taxon>
        <taxon>Spermophilus</taxon>
    </lineage>
</organism>
<proteinExistence type="inferred from homology"/>
<gene>
    <name type="primary">MT-CYB</name>
    <name type="synonym">COB</name>
    <name type="synonym">CYTB</name>
    <name type="synonym">MTCYB</name>
</gene>
<reference key="1">
    <citation type="journal article" date="2003" name="J. Mammal. Evol.">
        <title>Phylogeny and evolutionary history of the ground squirrels (Rodentia: Marmotinae).</title>
        <authorList>
            <person name="Harrison R.G."/>
            <person name="Bogdanowicz S.M."/>
            <person name="Hoffmann R.S."/>
            <person name="Yensen E."/>
            <person name="Sherman P.W."/>
        </authorList>
    </citation>
    <scope>NUCLEOTIDE SEQUENCE [GENOMIC DNA]</scope>
</reference>